<evidence type="ECO:0000269" key="1">
    <source ref="1"/>
</evidence>
<evidence type="ECO:0000303" key="2">
    <source ref="1"/>
</evidence>
<evidence type="ECO:0000305" key="3"/>
<proteinExistence type="evidence at protein level"/>
<dbReference type="GO" id="GO:0005576">
    <property type="term" value="C:extracellular region"/>
    <property type="evidence" value="ECO:0007669"/>
    <property type="project" value="UniProtKB-SubCell"/>
</dbReference>
<dbReference type="GO" id="GO:0006952">
    <property type="term" value="P:defense response"/>
    <property type="evidence" value="ECO:0007669"/>
    <property type="project" value="UniProtKB-KW"/>
</dbReference>
<organism>
    <name type="scientific">Phyllomedusa burmeisteri</name>
    <name type="common">Brazilian common walking leaf frog</name>
    <dbReference type="NCBI Taxonomy" id="39413"/>
    <lineage>
        <taxon>Eukaryota</taxon>
        <taxon>Metazoa</taxon>
        <taxon>Chordata</taxon>
        <taxon>Craniata</taxon>
        <taxon>Vertebrata</taxon>
        <taxon>Euteleostomi</taxon>
        <taxon>Amphibia</taxon>
        <taxon>Batrachia</taxon>
        <taxon>Anura</taxon>
        <taxon>Neobatrachia</taxon>
        <taxon>Hyloidea</taxon>
        <taxon>Hylidae</taxon>
        <taxon>Phyllomedusinae</taxon>
        <taxon>Phyllomedusa</taxon>
    </lineage>
</organism>
<comment type="subcellular location">
    <subcellularLocation>
        <location evidence="1">Secreted</location>
    </subcellularLocation>
</comment>
<comment type="tissue specificity">
    <text evidence="1">Expressed by the parotoid glands.</text>
</comment>
<comment type="mass spectrometry" mass="1230.67" method="Electrospray" evidence="1"/>
<name>BPPBP_PHYBU</name>
<accession>P86284</accession>
<keyword id="KW-0878">Amphibian defense peptide</keyword>
<keyword id="KW-0903">Direct protein sequencing</keyword>
<keyword id="KW-0873">Pyrrolidone carboxylic acid</keyword>
<keyword id="KW-0964">Secreted</keyword>
<feature type="peptide" id="PRO_0000378907" description="Bradykinin-potentiating peptide Pb" evidence="1">
    <location>
        <begin position="1"/>
        <end position="11"/>
    </location>
</feature>
<feature type="modified residue" description="Pyrrolidone carboxylic acid" evidence="1">
    <location>
        <position position="1"/>
    </location>
</feature>
<sequence length="11" mass="1248">QTLLQELPIPP</sequence>
<protein>
    <recommendedName>
        <fullName evidence="2">Bradykinin-potentiating peptide Pb</fullName>
        <shortName evidence="2">BPP Pb</shortName>
    </recommendedName>
</protein>
<reference evidence="3" key="1">
    <citation type="submission" date="2009-04" db="UniProtKB">
        <title>Identification of peptides from Phyllomedusa burmesteri skin secretomics by nano LC MS/MS.</title>
        <authorList>
            <person name="Conceicao K."/>
            <person name="Klitzke C.F."/>
            <person name="Brito R.C."/>
            <person name="Andrade D.F."/>
            <person name="Junca F.A."/>
            <person name="Biondi I."/>
            <person name="Lopes-Ferreira M."/>
        </authorList>
    </citation>
    <scope>PROTEIN SEQUENCE</scope>
    <scope>SUBCELLULAR LOCATION</scope>
    <scope>TISSUE SPECIFICITY</scope>
    <scope>MASS SPECTROMETRY</scope>
    <scope>PYROGLUTAMATE FORMATION AT GLN-1</scope>
    <source>
        <tissue evidence="1">Parotoid gland secretion</tissue>
    </source>
</reference>